<gene>
    <name evidence="3" type="primary">metl-1</name>
    <name evidence="3" type="ORF">CBG02883</name>
</gene>
<keyword id="KW-0489">Methyltransferase</keyword>
<keyword id="KW-0539">Nucleus</keyword>
<keyword id="KW-1185">Reference proteome</keyword>
<keyword id="KW-0694">RNA-binding</keyword>
<keyword id="KW-0949">S-adenosyl-L-methionine</keyword>
<keyword id="KW-0808">Transferase</keyword>
<keyword id="KW-0819">tRNA processing</keyword>
<keyword id="KW-0820">tRNA-binding</keyword>
<feature type="chain" id="PRO_0000370563" description="tRNA (guanine-N(7)-)-methyltransferase">
    <location>
        <begin position="1"/>
        <end position="256"/>
    </location>
</feature>
<feature type="region of interest" description="Disordered" evidence="2">
    <location>
        <begin position="1"/>
        <end position="43"/>
    </location>
</feature>
<feature type="compositionally biased region" description="Basic residues" evidence="2">
    <location>
        <begin position="26"/>
        <end position="36"/>
    </location>
</feature>
<feature type="active site" evidence="1">
    <location>
        <position position="155"/>
    </location>
</feature>
<feature type="binding site" evidence="1">
    <location>
        <position position="74"/>
    </location>
    <ligand>
        <name>S-adenosyl-L-methionine</name>
        <dbReference type="ChEBI" id="CHEBI:59789"/>
    </ligand>
</feature>
<feature type="binding site" evidence="1">
    <location>
        <begin position="97"/>
        <end position="98"/>
    </location>
    <ligand>
        <name>S-adenosyl-L-methionine</name>
        <dbReference type="ChEBI" id="CHEBI:59789"/>
    </ligand>
</feature>
<feature type="binding site" evidence="1">
    <location>
        <begin position="132"/>
        <end position="133"/>
    </location>
    <ligand>
        <name>S-adenosyl-L-methionine</name>
        <dbReference type="ChEBI" id="CHEBI:59789"/>
    </ligand>
</feature>
<feature type="binding site" evidence="1">
    <location>
        <position position="152"/>
    </location>
    <ligand>
        <name>S-adenosyl-L-methionine</name>
        <dbReference type="ChEBI" id="CHEBI:59789"/>
    </ligand>
</feature>
<feature type="binding site" evidence="1">
    <location>
        <begin position="230"/>
        <end position="232"/>
    </location>
    <ligand>
        <name>S-adenosyl-L-methionine</name>
        <dbReference type="ChEBI" id="CHEBI:59789"/>
    </ligand>
</feature>
<evidence type="ECO:0000255" key="1">
    <source>
        <dbReference type="HAMAP-Rule" id="MF_03055"/>
    </source>
</evidence>
<evidence type="ECO:0000256" key="2">
    <source>
        <dbReference type="SAM" id="MobiDB-lite"/>
    </source>
</evidence>
<evidence type="ECO:0000312" key="3">
    <source>
        <dbReference type="WormBase" id="CBG02883"/>
    </source>
</evidence>
<comment type="function">
    <text evidence="1">Catalyzes the formation of N(7)-methylguanine at position 46 (m7G46) in tRNA.</text>
</comment>
<comment type="catalytic activity">
    <reaction evidence="1">
        <text>guanosine(46) in tRNA + S-adenosyl-L-methionine = N(7)-methylguanosine(46) in tRNA + S-adenosyl-L-homocysteine</text>
        <dbReference type="Rhea" id="RHEA:42708"/>
        <dbReference type="Rhea" id="RHEA-COMP:10188"/>
        <dbReference type="Rhea" id="RHEA-COMP:10189"/>
        <dbReference type="ChEBI" id="CHEBI:57856"/>
        <dbReference type="ChEBI" id="CHEBI:59789"/>
        <dbReference type="ChEBI" id="CHEBI:74269"/>
        <dbReference type="ChEBI" id="CHEBI:74480"/>
        <dbReference type="EC" id="2.1.1.33"/>
    </reaction>
</comment>
<comment type="pathway">
    <text evidence="1">tRNA modification; N(7)-methylguanine-tRNA biosynthesis.</text>
</comment>
<comment type="subcellular location">
    <subcellularLocation>
        <location evidence="1">Nucleus</location>
    </subcellularLocation>
</comment>
<comment type="similarity">
    <text evidence="1">Belongs to the class I-like SAM-binding methyltransferase superfamily. TrmB family.</text>
</comment>
<sequence>MDVDPVNSEMELDNKPTCETVPGLPQKKHYRQRAHSNPHSDHDIEYPLTPDHMDWSKQYGDYAAGRQVEFADIGCGYGGLLMRLSPMFPETLMIGMEIRVKVSDYVNEKIQALRKHHEGAGHYRNIAVLRSNAMKYMPNYFRKGQLSKMFFLFPDPHFKNKKHKWRIITPTLVSEYAYVLREQGLIYTITDVKDLHDWMVKHLNEHPLFERLSDDEMKADPVVAMLYESTEEGQKVTRNDGEKWPAVFRRLPNPPL</sequence>
<organism>
    <name type="scientific">Caenorhabditis briggsae</name>
    <dbReference type="NCBI Taxonomy" id="6238"/>
    <lineage>
        <taxon>Eukaryota</taxon>
        <taxon>Metazoa</taxon>
        <taxon>Ecdysozoa</taxon>
        <taxon>Nematoda</taxon>
        <taxon>Chromadorea</taxon>
        <taxon>Rhabditida</taxon>
        <taxon>Rhabditina</taxon>
        <taxon>Rhabditomorpha</taxon>
        <taxon>Rhabditoidea</taxon>
        <taxon>Rhabditidae</taxon>
        <taxon>Peloderinae</taxon>
        <taxon>Caenorhabditis</taxon>
    </lineage>
</organism>
<reference key="1">
    <citation type="journal article" date="2003" name="PLoS Biol.">
        <title>The genome sequence of Caenorhabditis briggsae: a platform for comparative genomics.</title>
        <authorList>
            <person name="Stein L.D."/>
            <person name="Bao Z."/>
            <person name="Blasiar D."/>
            <person name="Blumenthal T."/>
            <person name="Brent M.R."/>
            <person name="Chen N."/>
            <person name="Chinwalla A."/>
            <person name="Clarke L."/>
            <person name="Clee C."/>
            <person name="Coghlan A."/>
            <person name="Coulson A."/>
            <person name="D'Eustachio P."/>
            <person name="Fitch D.H.A."/>
            <person name="Fulton L.A."/>
            <person name="Fulton R.E."/>
            <person name="Griffiths-Jones S."/>
            <person name="Harris T.W."/>
            <person name="Hillier L.W."/>
            <person name="Kamath R."/>
            <person name="Kuwabara P.E."/>
            <person name="Mardis E.R."/>
            <person name="Marra M.A."/>
            <person name="Miner T.L."/>
            <person name="Minx P."/>
            <person name="Mullikin J.C."/>
            <person name="Plumb R.W."/>
            <person name="Rogers J."/>
            <person name="Schein J.E."/>
            <person name="Sohrmann M."/>
            <person name="Spieth J."/>
            <person name="Stajich J.E."/>
            <person name="Wei C."/>
            <person name="Willey D."/>
            <person name="Wilson R.K."/>
            <person name="Durbin R.M."/>
            <person name="Waterston R.H."/>
        </authorList>
    </citation>
    <scope>NUCLEOTIDE SEQUENCE [LARGE SCALE GENOMIC DNA]</scope>
    <source>
        <strain>AF16</strain>
    </source>
</reference>
<dbReference type="EC" id="2.1.1.33" evidence="1"/>
<dbReference type="EMBL" id="HE601438">
    <property type="protein sequence ID" value="CAP23718.1"/>
    <property type="molecule type" value="Genomic_DNA"/>
</dbReference>
<dbReference type="RefSeq" id="XP_002631108.1">
    <property type="nucleotide sequence ID" value="XM_002631062.1"/>
</dbReference>
<dbReference type="SMR" id="A8WTA7"/>
<dbReference type="FunCoup" id="A8WTA7">
    <property type="interactions" value="1260"/>
</dbReference>
<dbReference type="STRING" id="6238.A8WTA7"/>
<dbReference type="EnsemblMetazoa" id="CBG02883.1">
    <property type="protein sequence ID" value="CBG02883.1"/>
    <property type="gene ID" value="WBGene00025851"/>
</dbReference>
<dbReference type="GeneID" id="8572622"/>
<dbReference type="KEGG" id="cbr:CBG_02883"/>
<dbReference type="CTD" id="8572622"/>
<dbReference type="WormBase" id="CBG02883">
    <property type="protein sequence ID" value="CBP00870"/>
    <property type="gene ID" value="WBGene00025851"/>
    <property type="gene designation" value="Cbr-metl-1"/>
</dbReference>
<dbReference type="eggNOG" id="KOG3115">
    <property type="taxonomic scope" value="Eukaryota"/>
</dbReference>
<dbReference type="HOGENOM" id="CLU_050910_3_1_1"/>
<dbReference type="InParanoid" id="A8WTA7"/>
<dbReference type="OMA" id="LPNYFAK"/>
<dbReference type="OrthoDB" id="47276at2759"/>
<dbReference type="UniPathway" id="UPA00989"/>
<dbReference type="Proteomes" id="UP000008549">
    <property type="component" value="Unassembled WGS sequence"/>
</dbReference>
<dbReference type="GO" id="GO:0005634">
    <property type="term" value="C:nucleus"/>
    <property type="evidence" value="ECO:0007669"/>
    <property type="project" value="UniProtKB-SubCell"/>
</dbReference>
<dbReference type="GO" id="GO:0043527">
    <property type="term" value="C:tRNA methyltransferase complex"/>
    <property type="evidence" value="ECO:0000318"/>
    <property type="project" value="GO_Central"/>
</dbReference>
<dbReference type="GO" id="GO:0008176">
    <property type="term" value="F:tRNA (guanine(46)-N7)-methyltransferase activity"/>
    <property type="evidence" value="ECO:0000318"/>
    <property type="project" value="GO_Central"/>
</dbReference>
<dbReference type="GO" id="GO:0000049">
    <property type="term" value="F:tRNA binding"/>
    <property type="evidence" value="ECO:0007669"/>
    <property type="project" value="UniProtKB-UniRule"/>
</dbReference>
<dbReference type="GO" id="GO:0036265">
    <property type="term" value="P:RNA (guanine-N7)-methylation"/>
    <property type="evidence" value="ECO:0000318"/>
    <property type="project" value="GO_Central"/>
</dbReference>
<dbReference type="GO" id="GO:0030488">
    <property type="term" value="P:tRNA methylation"/>
    <property type="evidence" value="ECO:0000318"/>
    <property type="project" value="GO_Central"/>
</dbReference>
<dbReference type="FunFam" id="3.40.50.150:FF:000060">
    <property type="entry name" value="tRNA (guanine-N(7)-)-methyltransferase"/>
    <property type="match status" value="1"/>
</dbReference>
<dbReference type="Gene3D" id="3.40.50.150">
    <property type="entry name" value="Vaccinia Virus protein VP39"/>
    <property type="match status" value="1"/>
</dbReference>
<dbReference type="HAMAP" id="MF_03055">
    <property type="entry name" value="tRNA_methyltr_TrmB_euk"/>
    <property type="match status" value="1"/>
</dbReference>
<dbReference type="InterPro" id="IPR029063">
    <property type="entry name" value="SAM-dependent_MTases_sf"/>
</dbReference>
<dbReference type="InterPro" id="IPR025763">
    <property type="entry name" value="Trm8_euk"/>
</dbReference>
<dbReference type="InterPro" id="IPR003358">
    <property type="entry name" value="tRNA_(Gua-N-7)_MeTrfase_Trmb"/>
</dbReference>
<dbReference type="NCBIfam" id="TIGR00091">
    <property type="entry name" value="tRNA (guanosine(46)-N7)-methyltransferase TrmB"/>
    <property type="match status" value="1"/>
</dbReference>
<dbReference type="PANTHER" id="PTHR23417">
    <property type="entry name" value="3-DEOXY-D-MANNO-OCTULOSONIC-ACID TRANSFERASE/TRNA GUANINE-N 7 - -METHYLTRANSFERASE"/>
    <property type="match status" value="1"/>
</dbReference>
<dbReference type="PANTHER" id="PTHR23417:SF16">
    <property type="entry name" value="TRNA (GUANINE-N(7)-)-METHYLTRANSFERASE"/>
    <property type="match status" value="1"/>
</dbReference>
<dbReference type="Pfam" id="PF02390">
    <property type="entry name" value="Methyltransf_4"/>
    <property type="match status" value="1"/>
</dbReference>
<dbReference type="SUPFAM" id="SSF53335">
    <property type="entry name" value="S-adenosyl-L-methionine-dependent methyltransferases"/>
    <property type="match status" value="1"/>
</dbReference>
<dbReference type="PROSITE" id="PS51625">
    <property type="entry name" value="SAM_MT_TRMB"/>
    <property type="match status" value="1"/>
</dbReference>
<accession>A8WTA7</accession>
<protein>
    <recommendedName>
        <fullName evidence="1">tRNA (guanine-N(7)-)-methyltransferase</fullName>
        <ecNumber evidence="1">2.1.1.33</ecNumber>
    </recommendedName>
    <alternativeName>
        <fullName evidence="1">tRNA (guanine(46)-N(7))-methyltransferase</fullName>
    </alternativeName>
    <alternativeName>
        <fullName evidence="1">tRNA(m7G46)-methyltransferase</fullName>
    </alternativeName>
</protein>
<proteinExistence type="inferred from homology"/>
<name>TRMB_CAEBR</name>